<dbReference type="EC" id="1.10.3.-"/>
<dbReference type="EMBL" id="CP000253">
    <property type="protein sequence ID" value="ABD30123.1"/>
    <property type="status" value="ALT_INIT"/>
    <property type="molecule type" value="Genomic_DNA"/>
</dbReference>
<dbReference type="RefSeq" id="YP_499551.1">
    <property type="nucleotide sequence ID" value="NC_007795.1"/>
</dbReference>
<dbReference type="SMR" id="Q2FZK2"/>
<dbReference type="STRING" id="93061.SAOUHSC_00999"/>
<dbReference type="PaxDb" id="1280-SAXN108_1055"/>
<dbReference type="GeneID" id="3920399"/>
<dbReference type="KEGG" id="sao:SAOUHSC_00999"/>
<dbReference type="PATRIC" id="fig|93061.5.peg.917"/>
<dbReference type="eggNOG" id="COG3125">
    <property type="taxonomic scope" value="Bacteria"/>
</dbReference>
<dbReference type="HOGENOM" id="CLU_140945_2_0_9"/>
<dbReference type="OrthoDB" id="2361460at2"/>
<dbReference type="Proteomes" id="UP000008816">
    <property type="component" value="Chromosome"/>
</dbReference>
<dbReference type="GO" id="GO:0009319">
    <property type="term" value="C:cytochrome o ubiquinol oxidase complex"/>
    <property type="evidence" value="ECO:0000318"/>
    <property type="project" value="GO_Central"/>
</dbReference>
<dbReference type="GO" id="GO:0005886">
    <property type="term" value="C:plasma membrane"/>
    <property type="evidence" value="ECO:0000318"/>
    <property type="project" value="GO_Central"/>
</dbReference>
<dbReference type="GO" id="GO:0009486">
    <property type="term" value="F:cytochrome bo3 ubiquinol oxidase activity"/>
    <property type="evidence" value="ECO:0000318"/>
    <property type="project" value="GO_Central"/>
</dbReference>
<dbReference type="GO" id="GO:0016682">
    <property type="term" value="F:oxidoreductase activity, acting on diphenols and related substances as donors, oxygen as acceptor"/>
    <property type="evidence" value="ECO:0007669"/>
    <property type="project" value="InterPro"/>
</dbReference>
<dbReference type="GO" id="GO:0015078">
    <property type="term" value="F:proton transmembrane transporter activity"/>
    <property type="evidence" value="ECO:0000318"/>
    <property type="project" value="GO_Central"/>
</dbReference>
<dbReference type="GO" id="GO:0019646">
    <property type="term" value="P:aerobic electron transport chain"/>
    <property type="evidence" value="ECO:0000318"/>
    <property type="project" value="GO_Central"/>
</dbReference>
<dbReference type="GO" id="GO:0042773">
    <property type="term" value="P:ATP synthesis coupled electron transport"/>
    <property type="evidence" value="ECO:0007669"/>
    <property type="project" value="InterPro"/>
</dbReference>
<dbReference type="GO" id="GO:0015990">
    <property type="term" value="P:electron transport coupled proton transport"/>
    <property type="evidence" value="ECO:0000318"/>
    <property type="project" value="GO_Central"/>
</dbReference>
<dbReference type="InterPro" id="IPR005171">
    <property type="entry name" value="Cyt_c_oxidase_su4_prok"/>
</dbReference>
<dbReference type="InterPro" id="IPR050968">
    <property type="entry name" value="Cytochrome_c_oxidase_bac_sub4"/>
</dbReference>
<dbReference type="InterPro" id="IPR014250">
    <property type="entry name" value="QoxD"/>
</dbReference>
<dbReference type="NCBIfam" id="TIGR02901">
    <property type="entry name" value="QoxD"/>
    <property type="match status" value="1"/>
</dbReference>
<dbReference type="PANTHER" id="PTHR36835">
    <property type="entry name" value="CYTOCHROME BO(3) UBIQUINOL OXIDASE SUBUNIT 4"/>
    <property type="match status" value="1"/>
</dbReference>
<dbReference type="PANTHER" id="PTHR36835:SF1">
    <property type="entry name" value="CYTOCHROME BO(3) UBIQUINOL OXIDASE SUBUNIT 4"/>
    <property type="match status" value="1"/>
</dbReference>
<dbReference type="Pfam" id="PF03626">
    <property type="entry name" value="COX4_pro"/>
    <property type="match status" value="1"/>
</dbReference>
<gene>
    <name type="primary">qoxD</name>
    <name type="ordered locus">SAOUHSC_00999</name>
</gene>
<comment type="function">
    <text evidence="1">Catalyzes quinol oxidation with the concomitant reduction of oxygen to water.</text>
</comment>
<comment type="catalytic activity">
    <reaction>
        <text>2 a quinol + O2 = 2 a quinone + 2 H2O</text>
        <dbReference type="Rhea" id="RHEA:55376"/>
        <dbReference type="ChEBI" id="CHEBI:15377"/>
        <dbReference type="ChEBI" id="CHEBI:15379"/>
        <dbReference type="ChEBI" id="CHEBI:24646"/>
        <dbReference type="ChEBI" id="CHEBI:132124"/>
    </reaction>
</comment>
<comment type="subcellular location">
    <subcellularLocation>
        <location evidence="1">Cell membrane</location>
        <topology evidence="1">Multi-pass membrane protein</topology>
    </subcellularLocation>
</comment>
<comment type="similarity">
    <text evidence="3">Belongs to the cytochrome c oxidase bacterial subunit 4 family.</text>
</comment>
<comment type="sequence caution" evidence="3">
    <conflict type="erroneous initiation">
        <sequence resource="EMBL-CDS" id="ABD30123"/>
    </conflict>
</comment>
<name>QOX4_STAA8</name>
<evidence type="ECO:0000250" key="1"/>
<evidence type="ECO:0000255" key="2"/>
<evidence type="ECO:0000305" key="3"/>
<proteinExistence type="inferred from homology"/>
<accession>Q2FZK2</accession>
<organism>
    <name type="scientific">Staphylococcus aureus (strain NCTC 8325 / PS 47)</name>
    <dbReference type="NCBI Taxonomy" id="93061"/>
    <lineage>
        <taxon>Bacteria</taxon>
        <taxon>Bacillati</taxon>
        <taxon>Bacillota</taxon>
        <taxon>Bacilli</taxon>
        <taxon>Bacillales</taxon>
        <taxon>Staphylococcaceae</taxon>
        <taxon>Staphylococcus</taxon>
    </lineage>
</organism>
<protein>
    <recommendedName>
        <fullName>Probable quinol oxidase subunit 4</fullName>
        <ecNumber>1.10.3.-</ecNumber>
    </recommendedName>
    <alternativeName>
        <fullName>Quinol oxidase polypeptide IV</fullName>
    </alternativeName>
</protein>
<reference key="1">
    <citation type="book" date="2006" name="Gram positive pathogens, 2nd edition">
        <title>The Staphylococcus aureus NCTC 8325 genome.</title>
        <editorList>
            <person name="Fischetti V."/>
            <person name="Novick R."/>
            <person name="Ferretti J."/>
            <person name="Portnoy D."/>
            <person name="Rood J."/>
        </editorList>
        <authorList>
            <person name="Gillaspy A.F."/>
            <person name="Worrell V."/>
            <person name="Orvis J."/>
            <person name="Roe B.A."/>
            <person name="Dyer D.W."/>
            <person name="Iandolo J.J."/>
        </authorList>
    </citation>
    <scope>NUCLEOTIDE SEQUENCE [LARGE SCALE GENOMIC DNA]</scope>
    <source>
        <strain>NCTC 8325 / PS 47</strain>
    </source>
</reference>
<sequence>MSTIMKHTVGFIASIVLTLLAVYVTLYTSLTFHAKLTIIFGFAFVQAGLQLLMFMHLTEGKDGRLQTFKVIFALVITLCFVVGTYWVMQGGHSSHL</sequence>
<keyword id="KW-1003">Cell membrane</keyword>
<keyword id="KW-0472">Membrane</keyword>
<keyword id="KW-0560">Oxidoreductase</keyword>
<keyword id="KW-1185">Reference proteome</keyword>
<keyword id="KW-0812">Transmembrane</keyword>
<keyword id="KW-1133">Transmembrane helix</keyword>
<feature type="chain" id="PRO_0000275864" description="Probable quinol oxidase subunit 4">
    <location>
        <begin position="1"/>
        <end position="96"/>
    </location>
</feature>
<feature type="transmembrane region" description="Helical" evidence="2">
    <location>
        <begin position="8"/>
        <end position="28"/>
    </location>
</feature>
<feature type="transmembrane region" description="Helical" evidence="2">
    <location>
        <begin position="36"/>
        <end position="56"/>
    </location>
</feature>
<feature type="transmembrane region" description="Helical" evidence="2">
    <location>
        <begin position="68"/>
        <end position="88"/>
    </location>
</feature>